<protein>
    <recommendedName>
        <fullName evidence="1">Phycocyanobilin:ferredoxin oxidoreductase</fullName>
        <ecNumber evidence="1">1.3.7.5</ecNumber>
    </recommendedName>
</protein>
<feature type="chain" id="PRO_1000082583" description="Phycocyanobilin:ferredoxin oxidoreductase">
    <location>
        <begin position="1"/>
        <end position="245"/>
    </location>
</feature>
<proteinExistence type="inferred from homology"/>
<sequence length="245" mass="27685">MIAVTTPEILPLLHPLIGQLATAILSHWENYLDLSPFELPEGLGYVEGRLEGEKLIIENRCYQTPQFRKMHLELAKLGNGLDILHCVMFPRPEYPLPMFGCDIVSGKAGISAAIVDLSPTSGDKTLPSAYNQALAALPGADFAQARDLPPWGHIFSQYCLFIRPETAAEERQFLQRVTDFLTIHCKCARESQPLSGEEARIYLQGQRDYCSQQQKNDKTRRVLEKAFGWEWAERYMTGVLFDLPD</sequence>
<dbReference type="EC" id="1.3.7.5" evidence="1"/>
<dbReference type="EMBL" id="AP009552">
    <property type="protein sequence ID" value="BAG00476.1"/>
    <property type="molecule type" value="Genomic_DNA"/>
</dbReference>
<dbReference type="RefSeq" id="WP_004163095.1">
    <property type="nucleotide sequence ID" value="NC_010296.1"/>
</dbReference>
<dbReference type="SMR" id="B0JPG5"/>
<dbReference type="STRING" id="449447.MAE_06540"/>
<dbReference type="PaxDb" id="449447-MAE_06540"/>
<dbReference type="EnsemblBacteria" id="BAG00476">
    <property type="protein sequence ID" value="BAG00476"/>
    <property type="gene ID" value="MAE_06540"/>
</dbReference>
<dbReference type="KEGG" id="mar:MAE_06540"/>
<dbReference type="eggNOG" id="ENOG502Z7RN">
    <property type="taxonomic scope" value="Bacteria"/>
</dbReference>
<dbReference type="HOGENOM" id="CLU_074224_0_0_3"/>
<dbReference type="BioCyc" id="MAER449447:MAE_RS02905-MONOMER"/>
<dbReference type="Proteomes" id="UP000001510">
    <property type="component" value="Chromosome"/>
</dbReference>
<dbReference type="GO" id="GO:0050897">
    <property type="term" value="F:cobalt ion binding"/>
    <property type="evidence" value="ECO:0007669"/>
    <property type="project" value="InterPro"/>
</dbReference>
<dbReference type="GO" id="GO:0050620">
    <property type="term" value="F:phycocyanobilin:ferredoxin oxidoreductase activity"/>
    <property type="evidence" value="ECO:0007669"/>
    <property type="project" value="UniProtKB-UniRule"/>
</dbReference>
<dbReference type="GO" id="GO:0010024">
    <property type="term" value="P:phytochromobilin biosynthetic process"/>
    <property type="evidence" value="ECO:0007669"/>
    <property type="project" value="InterPro"/>
</dbReference>
<dbReference type="Gene3D" id="3.40.1500.20">
    <property type="match status" value="1"/>
</dbReference>
<dbReference type="HAMAP" id="MF_00618">
    <property type="entry name" value="Ferredoxin_bilin_red"/>
    <property type="match status" value="1"/>
</dbReference>
<dbReference type="InterPro" id="IPR009249">
    <property type="entry name" value="Ferredoxin-dep_bilin_Rdtase"/>
</dbReference>
<dbReference type="InterPro" id="IPR022870">
    <property type="entry name" value="Ferredoxin_bilin_OxRdtase"/>
</dbReference>
<dbReference type="NCBIfam" id="NF002760">
    <property type="entry name" value="PRK02816.1"/>
    <property type="match status" value="1"/>
</dbReference>
<dbReference type="PANTHER" id="PTHR34557">
    <property type="entry name" value="PHYTOCHROMOBILIN:FERREDOXIN OXIDOREDUCTASE, CHLOROPLASTIC"/>
    <property type="match status" value="1"/>
</dbReference>
<dbReference type="PANTHER" id="PTHR34557:SF1">
    <property type="entry name" value="PHYTOCHROMOBILIN:FERREDOXIN OXIDOREDUCTASE, CHLOROPLASTIC"/>
    <property type="match status" value="1"/>
</dbReference>
<dbReference type="Pfam" id="PF05996">
    <property type="entry name" value="Fe_bilin_red"/>
    <property type="match status" value="1"/>
</dbReference>
<reference key="1">
    <citation type="journal article" date="2007" name="DNA Res.">
        <title>Complete genomic structure of the bloom-forming toxic cyanobacterium Microcystis aeruginosa NIES-843.</title>
        <authorList>
            <person name="Kaneko T."/>
            <person name="Nakajima N."/>
            <person name="Okamoto S."/>
            <person name="Suzuki I."/>
            <person name="Tanabe Y."/>
            <person name="Tamaoki M."/>
            <person name="Nakamura Y."/>
            <person name="Kasai F."/>
            <person name="Watanabe A."/>
            <person name="Kawashima K."/>
            <person name="Kishida Y."/>
            <person name="Ono A."/>
            <person name="Shimizu Y."/>
            <person name="Takahashi C."/>
            <person name="Minami C."/>
            <person name="Fujishiro T."/>
            <person name="Kohara M."/>
            <person name="Katoh M."/>
            <person name="Nakazaki N."/>
            <person name="Nakayama S."/>
            <person name="Yamada M."/>
            <person name="Tabata S."/>
            <person name="Watanabe M.M."/>
        </authorList>
    </citation>
    <scope>NUCLEOTIDE SEQUENCE [LARGE SCALE GENOMIC DNA]</scope>
    <source>
        <strain>NIES-843 / IAM M-247</strain>
    </source>
</reference>
<gene>
    <name evidence="1" type="primary">pcyA</name>
    <name type="ordered locus">MAE_06540</name>
</gene>
<evidence type="ECO:0000255" key="1">
    <source>
        <dbReference type="HAMAP-Rule" id="MF_00618"/>
    </source>
</evidence>
<name>PCYA_MICAN</name>
<accession>B0JPG5</accession>
<organism>
    <name type="scientific">Microcystis aeruginosa (strain NIES-843 / IAM M-2473)</name>
    <dbReference type="NCBI Taxonomy" id="449447"/>
    <lineage>
        <taxon>Bacteria</taxon>
        <taxon>Bacillati</taxon>
        <taxon>Cyanobacteriota</taxon>
        <taxon>Cyanophyceae</taxon>
        <taxon>Oscillatoriophycideae</taxon>
        <taxon>Chroococcales</taxon>
        <taxon>Microcystaceae</taxon>
        <taxon>Microcystis</taxon>
    </lineage>
</organism>
<keyword id="KW-0560">Oxidoreductase</keyword>
<comment type="function">
    <text evidence="1">Catalyzes the four-electron reduction of biliverdin IX-alpha (2-electron reduction at both the A and D rings); the reaction proceeds via an isolatable 2-electron intermediate, 181,182-dihydrobiliverdin.</text>
</comment>
<comment type="catalytic activity">
    <reaction evidence="1">
        <text>(2R,3Z)-phycocyanobilin + 4 oxidized [2Fe-2S]-[ferredoxin] = biliverdin IXalpha + 4 reduced [2Fe-2S]-[ferredoxin] + 4 H(+)</text>
        <dbReference type="Rhea" id="RHEA:15309"/>
        <dbReference type="Rhea" id="RHEA-COMP:10000"/>
        <dbReference type="Rhea" id="RHEA-COMP:10001"/>
        <dbReference type="ChEBI" id="CHEBI:15378"/>
        <dbReference type="ChEBI" id="CHEBI:33737"/>
        <dbReference type="ChEBI" id="CHEBI:33738"/>
        <dbReference type="ChEBI" id="CHEBI:57437"/>
        <dbReference type="ChEBI" id="CHEBI:57991"/>
        <dbReference type="EC" id="1.3.7.5"/>
    </reaction>
</comment>
<comment type="similarity">
    <text evidence="1">Belongs to the HY2 family.</text>
</comment>